<reference key="1">
    <citation type="journal article" date="1998" name="Nature">
        <title>The genome sequence of Rickettsia prowazekii and the origin of mitochondria.</title>
        <authorList>
            <person name="Andersson S.G.E."/>
            <person name="Zomorodipour A."/>
            <person name="Andersson J.O."/>
            <person name="Sicheritz-Ponten T."/>
            <person name="Alsmark U.C.M."/>
            <person name="Podowski R.M."/>
            <person name="Naeslund A.K."/>
            <person name="Eriksson A.-S."/>
            <person name="Winkler H.H."/>
            <person name="Kurland C.G."/>
        </authorList>
    </citation>
    <scope>NUCLEOTIDE SEQUENCE [LARGE SCALE GENOMIC DNA]</scope>
    <source>
        <strain>Madrid E</strain>
    </source>
</reference>
<dbReference type="EC" id="3.5.1.18" evidence="1"/>
<dbReference type="EMBL" id="AJ235273">
    <property type="protein sequence ID" value="CAA15297.1"/>
    <property type="molecule type" value="Genomic_DNA"/>
</dbReference>
<dbReference type="PIR" id="A71650">
    <property type="entry name" value="A71650"/>
</dbReference>
<dbReference type="RefSeq" id="NP_221221.1">
    <property type="nucleotide sequence ID" value="NC_000963.1"/>
</dbReference>
<dbReference type="RefSeq" id="WP_004596737.1">
    <property type="nucleotide sequence ID" value="NC_000963.1"/>
</dbReference>
<dbReference type="SMR" id="Q9ZC93"/>
<dbReference type="STRING" id="272947.gene:17555943"/>
<dbReference type="EnsemblBacteria" id="CAA15297">
    <property type="protein sequence ID" value="CAA15297"/>
    <property type="gene ID" value="CAA15297"/>
</dbReference>
<dbReference type="GeneID" id="57569997"/>
<dbReference type="KEGG" id="rpr:RP874"/>
<dbReference type="PATRIC" id="fig|272947.5.peg.913"/>
<dbReference type="eggNOG" id="COG0624">
    <property type="taxonomic scope" value="Bacteria"/>
</dbReference>
<dbReference type="HOGENOM" id="CLU_021802_4_0_5"/>
<dbReference type="OrthoDB" id="9809784at2"/>
<dbReference type="UniPathway" id="UPA00034">
    <property type="reaction ID" value="UER00021"/>
</dbReference>
<dbReference type="Proteomes" id="UP000002480">
    <property type="component" value="Chromosome"/>
</dbReference>
<dbReference type="GO" id="GO:0008777">
    <property type="term" value="F:acetylornithine deacetylase activity"/>
    <property type="evidence" value="ECO:0007669"/>
    <property type="project" value="TreeGrafter"/>
</dbReference>
<dbReference type="GO" id="GO:0050897">
    <property type="term" value="F:cobalt ion binding"/>
    <property type="evidence" value="ECO:0007669"/>
    <property type="project" value="UniProtKB-UniRule"/>
</dbReference>
<dbReference type="GO" id="GO:0009014">
    <property type="term" value="F:succinyl-diaminopimelate desuccinylase activity"/>
    <property type="evidence" value="ECO:0007669"/>
    <property type="project" value="UniProtKB-UniRule"/>
</dbReference>
<dbReference type="GO" id="GO:0008270">
    <property type="term" value="F:zinc ion binding"/>
    <property type="evidence" value="ECO:0007669"/>
    <property type="project" value="UniProtKB-UniRule"/>
</dbReference>
<dbReference type="GO" id="GO:0019877">
    <property type="term" value="P:diaminopimelate biosynthetic process"/>
    <property type="evidence" value="ECO:0007669"/>
    <property type="project" value="UniProtKB-UniRule"/>
</dbReference>
<dbReference type="GO" id="GO:0006526">
    <property type="term" value="P:L-arginine biosynthetic process"/>
    <property type="evidence" value="ECO:0007669"/>
    <property type="project" value="TreeGrafter"/>
</dbReference>
<dbReference type="GO" id="GO:0009089">
    <property type="term" value="P:lysine biosynthetic process via diaminopimelate"/>
    <property type="evidence" value="ECO:0007669"/>
    <property type="project" value="UniProtKB-UniRule"/>
</dbReference>
<dbReference type="CDD" id="cd03891">
    <property type="entry name" value="M20_DapE_proteobac"/>
    <property type="match status" value="1"/>
</dbReference>
<dbReference type="Gene3D" id="3.30.70.360">
    <property type="match status" value="1"/>
</dbReference>
<dbReference type="Gene3D" id="3.40.630.10">
    <property type="entry name" value="Zn peptidases"/>
    <property type="match status" value="2"/>
</dbReference>
<dbReference type="HAMAP" id="MF_01690">
    <property type="entry name" value="DapE"/>
    <property type="match status" value="1"/>
</dbReference>
<dbReference type="InterPro" id="IPR001261">
    <property type="entry name" value="ArgE/DapE_CS"/>
</dbReference>
<dbReference type="InterPro" id="IPR036264">
    <property type="entry name" value="Bact_exopeptidase_dim_dom"/>
</dbReference>
<dbReference type="InterPro" id="IPR005941">
    <property type="entry name" value="DapE_proteobac"/>
</dbReference>
<dbReference type="InterPro" id="IPR002933">
    <property type="entry name" value="Peptidase_M20"/>
</dbReference>
<dbReference type="InterPro" id="IPR011650">
    <property type="entry name" value="Peptidase_M20_dimer"/>
</dbReference>
<dbReference type="InterPro" id="IPR050072">
    <property type="entry name" value="Peptidase_M20A"/>
</dbReference>
<dbReference type="NCBIfam" id="TIGR01246">
    <property type="entry name" value="dapE_proteo"/>
    <property type="match status" value="1"/>
</dbReference>
<dbReference type="NCBIfam" id="NF009557">
    <property type="entry name" value="PRK13009.1"/>
    <property type="match status" value="1"/>
</dbReference>
<dbReference type="PANTHER" id="PTHR43808">
    <property type="entry name" value="ACETYLORNITHINE DEACETYLASE"/>
    <property type="match status" value="1"/>
</dbReference>
<dbReference type="PANTHER" id="PTHR43808:SF31">
    <property type="entry name" value="N-ACETYL-L-CITRULLINE DEACETYLASE"/>
    <property type="match status" value="1"/>
</dbReference>
<dbReference type="Pfam" id="PF07687">
    <property type="entry name" value="M20_dimer"/>
    <property type="match status" value="1"/>
</dbReference>
<dbReference type="Pfam" id="PF01546">
    <property type="entry name" value="Peptidase_M20"/>
    <property type="match status" value="1"/>
</dbReference>
<dbReference type="SUPFAM" id="SSF55031">
    <property type="entry name" value="Bacterial exopeptidase dimerisation domain"/>
    <property type="match status" value="1"/>
</dbReference>
<dbReference type="SUPFAM" id="SSF53187">
    <property type="entry name" value="Zn-dependent exopeptidases"/>
    <property type="match status" value="1"/>
</dbReference>
<dbReference type="PROSITE" id="PS00759">
    <property type="entry name" value="ARGE_DAPE_CPG2_2"/>
    <property type="match status" value="1"/>
</dbReference>
<organism>
    <name type="scientific">Rickettsia prowazekii (strain Madrid E)</name>
    <dbReference type="NCBI Taxonomy" id="272947"/>
    <lineage>
        <taxon>Bacteria</taxon>
        <taxon>Pseudomonadati</taxon>
        <taxon>Pseudomonadota</taxon>
        <taxon>Alphaproteobacteria</taxon>
        <taxon>Rickettsiales</taxon>
        <taxon>Rickettsiaceae</taxon>
        <taxon>Rickettsieae</taxon>
        <taxon>Rickettsia</taxon>
        <taxon>typhus group</taxon>
    </lineage>
</organism>
<name>DAPE_RICPR</name>
<protein>
    <recommendedName>
        <fullName evidence="1">Succinyl-diaminopimelate desuccinylase</fullName>
        <shortName evidence="1">SDAP desuccinylase</shortName>
        <ecNumber evidence="1">3.5.1.18</ecNumber>
    </recommendedName>
    <alternativeName>
        <fullName evidence="1">N-succinyl-LL-2,6-diaminoheptanedioate amidohydrolase</fullName>
    </alternativeName>
</protein>
<sequence length="383" mass="43474">MYTHYLKNLVSFKSVTPNSAGAIEYIDDLLKQHSFKTEIKIFGDSKKEQVTNLYAIFGGNEPNICFVGHVDVVPAGNYEFWHNSNPFKFHEQDGKIYGRGTVDMKGAIACFLAASLNFIKNNTDFKGSISFLITSDEEGKSKHGTKEMLQYIYDQRYKIDFAVVGEPTCEKEIGDTIKIGRRGSVNFKLNIVGLAGHVAYPHKANNPLPCLIKILNELINIKLDEGTEFFQNSNLEVTNIDVDNDTSNTIPASAAAHFNIRFNSLHNVETLRQLIEQIIKQYCKEYKVDYKLEYSSSAESFIQNPNDNDKIKKFANVIERTLKIKSKFSTSGGTSDARFVKDYCSLVEFGLLSDMAHKINEYTKISDLQKLYNVYYNFLIEIL</sequence>
<accession>Q9ZC93</accession>
<evidence type="ECO:0000255" key="1">
    <source>
        <dbReference type="HAMAP-Rule" id="MF_01690"/>
    </source>
</evidence>
<feature type="chain" id="PRO_0000375704" description="Succinyl-diaminopimelate desuccinylase">
    <location>
        <begin position="1"/>
        <end position="383"/>
    </location>
</feature>
<feature type="active site" evidence="1">
    <location>
        <position position="71"/>
    </location>
</feature>
<feature type="active site" description="Proton acceptor" evidence="1">
    <location>
        <position position="137"/>
    </location>
</feature>
<feature type="binding site" evidence="1">
    <location>
        <position position="69"/>
    </location>
    <ligand>
        <name>Zn(2+)</name>
        <dbReference type="ChEBI" id="CHEBI:29105"/>
        <label>1</label>
    </ligand>
</feature>
<feature type="binding site" evidence="1">
    <location>
        <position position="103"/>
    </location>
    <ligand>
        <name>Zn(2+)</name>
        <dbReference type="ChEBI" id="CHEBI:29105"/>
        <label>1</label>
    </ligand>
</feature>
<feature type="binding site" evidence="1">
    <location>
        <position position="103"/>
    </location>
    <ligand>
        <name>Zn(2+)</name>
        <dbReference type="ChEBI" id="CHEBI:29105"/>
        <label>2</label>
    </ligand>
</feature>
<feature type="binding site" evidence="1">
    <location>
        <position position="138"/>
    </location>
    <ligand>
        <name>Zn(2+)</name>
        <dbReference type="ChEBI" id="CHEBI:29105"/>
        <label>2</label>
    </ligand>
</feature>
<feature type="binding site" evidence="1">
    <location>
        <position position="166"/>
    </location>
    <ligand>
        <name>Zn(2+)</name>
        <dbReference type="ChEBI" id="CHEBI:29105"/>
        <label>1</label>
    </ligand>
</feature>
<feature type="binding site" evidence="1">
    <location>
        <position position="357"/>
    </location>
    <ligand>
        <name>Zn(2+)</name>
        <dbReference type="ChEBI" id="CHEBI:29105"/>
        <label>2</label>
    </ligand>
</feature>
<proteinExistence type="inferred from homology"/>
<gene>
    <name evidence="1" type="primary">dapE</name>
    <name type="ordered locus">RP874</name>
</gene>
<comment type="function">
    <text evidence="1">Catalyzes the hydrolysis of N-succinyl-L,L-diaminopimelic acid (SDAP), forming succinate and LL-2,6-diaminopimelate (DAP), an intermediate involved in the bacterial biosynthesis of lysine and meso-diaminopimelic acid, an essential component of bacterial cell walls.</text>
</comment>
<comment type="catalytic activity">
    <reaction evidence="1">
        <text>N-succinyl-(2S,6S)-2,6-diaminopimelate + H2O = (2S,6S)-2,6-diaminopimelate + succinate</text>
        <dbReference type="Rhea" id="RHEA:22608"/>
        <dbReference type="ChEBI" id="CHEBI:15377"/>
        <dbReference type="ChEBI" id="CHEBI:30031"/>
        <dbReference type="ChEBI" id="CHEBI:57609"/>
        <dbReference type="ChEBI" id="CHEBI:58087"/>
        <dbReference type="EC" id="3.5.1.18"/>
    </reaction>
</comment>
<comment type="cofactor">
    <cofactor evidence="1">
        <name>Zn(2+)</name>
        <dbReference type="ChEBI" id="CHEBI:29105"/>
    </cofactor>
    <cofactor evidence="1">
        <name>Co(2+)</name>
        <dbReference type="ChEBI" id="CHEBI:48828"/>
    </cofactor>
    <text evidence="1">Binds 2 Zn(2+) or Co(2+) ions per subunit.</text>
</comment>
<comment type="pathway">
    <text evidence="1">Amino-acid biosynthesis; L-lysine biosynthesis via DAP pathway; LL-2,6-diaminopimelate from (S)-tetrahydrodipicolinate (succinylase route): step 3/3.</text>
</comment>
<comment type="subunit">
    <text evidence="1">Homodimer.</text>
</comment>
<comment type="similarity">
    <text evidence="1">Belongs to the peptidase M20A family. DapE subfamily.</text>
</comment>
<keyword id="KW-0028">Amino-acid biosynthesis</keyword>
<keyword id="KW-0170">Cobalt</keyword>
<keyword id="KW-0220">Diaminopimelate biosynthesis</keyword>
<keyword id="KW-0378">Hydrolase</keyword>
<keyword id="KW-0457">Lysine biosynthesis</keyword>
<keyword id="KW-0479">Metal-binding</keyword>
<keyword id="KW-1185">Reference proteome</keyword>
<keyword id="KW-0862">Zinc</keyword>